<name>PDXB_LEGPH</name>
<gene>
    <name evidence="1" type="primary">pdxB</name>
    <name type="ordered locus">lpg0918</name>
</gene>
<evidence type="ECO:0000255" key="1">
    <source>
        <dbReference type="HAMAP-Rule" id="MF_01825"/>
    </source>
</evidence>
<organism>
    <name type="scientific">Legionella pneumophila subsp. pneumophila (strain Philadelphia 1 / ATCC 33152 / DSM 7513)</name>
    <dbReference type="NCBI Taxonomy" id="272624"/>
    <lineage>
        <taxon>Bacteria</taxon>
        <taxon>Pseudomonadati</taxon>
        <taxon>Pseudomonadota</taxon>
        <taxon>Gammaproteobacteria</taxon>
        <taxon>Legionellales</taxon>
        <taxon>Legionellaceae</taxon>
        <taxon>Legionella</taxon>
    </lineage>
</organism>
<protein>
    <recommendedName>
        <fullName evidence="1">Erythronate-4-phosphate dehydrogenase</fullName>
        <ecNumber evidence="1">1.1.1.290</ecNumber>
    </recommendedName>
</protein>
<accession>Q5ZX15</accession>
<feature type="chain" id="PRO_0000297446" description="Erythronate-4-phosphate dehydrogenase">
    <location>
        <begin position="1"/>
        <end position="350"/>
    </location>
</feature>
<feature type="active site" evidence="1">
    <location>
        <position position="205"/>
    </location>
</feature>
<feature type="active site" evidence="1">
    <location>
        <position position="231"/>
    </location>
</feature>
<feature type="active site" description="Proton donor" evidence="1">
    <location>
        <position position="248"/>
    </location>
</feature>
<feature type="binding site" evidence="1">
    <location>
        <position position="45"/>
    </location>
    <ligand>
        <name>substrate</name>
    </ligand>
</feature>
<feature type="binding site" evidence="1">
    <location>
        <position position="66"/>
    </location>
    <ligand>
        <name>substrate</name>
    </ligand>
</feature>
<feature type="binding site" evidence="1">
    <location>
        <begin position="124"/>
        <end position="125"/>
    </location>
    <ligand>
        <name>NAD(+)</name>
        <dbReference type="ChEBI" id="CHEBI:57540"/>
    </ligand>
</feature>
<feature type="binding site" evidence="1">
    <location>
        <position position="144"/>
    </location>
    <ligand>
        <name>NAD(+)</name>
        <dbReference type="ChEBI" id="CHEBI:57540"/>
    </ligand>
</feature>
<feature type="binding site" evidence="1">
    <location>
        <begin position="203"/>
        <end position="205"/>
    </location>
    <ligand>
        <name>NAD(+)</name>
        <dbReference type="ChEBI" id="CHEBI:57540"/>
    </ligand>
</feature>
<feature type="binding site" evidence="1">
    <location>
        <position position="226"/>
    </location>
    <ligand>
        <name>NAD(+)</name>
        <dbReference type="ChEBI" id="CHEBI:57540"/>
    </ligand>
</feature>
<feature type="binding site" evidence="1">
    <location>
        <position position="251"/>
    </location>
    <ligand>
        <name>NAD(+)</name>
        <dbReference type="ChEBI" id="CHEBI:57540"/>
    </ligand>
</feature>
<comment type="function">
    <text evidence="1">Catalyzes the oxidation of erythronate-4-phosphate to 3-hydroxy-2-oxo-4-phosphonooxybutanoate.</text>
</comment>
<comment type="catalytic activity">
    <reaction evidence="1">
        <text>4-phospho-D-erythronate + NAD(+) = (R)-3-hydroxy-2-oxo-4-phosphooxybutanoate + NADH + H(+)</text>
        <dbReference type="Rhea" id="RHEA:18829"/>
        <dbReference type="ChEBI" id="CHEBI:15378"/>
        <dbReference type="ChEBI" id="CHEBI:57540"/>
        <dbReference type="ChEBI" id="CHEBI:57945"/>
        <dbReference type="ChEBI" id="CHEBI:58538"/>
        <dbReference type="ChEBI" id="CHEBI:58766"/>
        <dbReference type="EC" id="1.1.1.290"/>
    </reaction>
</comment>
<comment type="pathway">
    <text evidence="1">Cofactor biosynthesis; pyridoxine 5'-phosphate biosynthesis; pyridoxine 5'-phosphate from D-erythrose 4-phosphate: step 2/5.</text>
</comment>
<comment type="subunit">
    <text evidence="1">Homodimer.</text>
</comment>
<comment type="subcellular location">
    <subcellularLocation>
        <location evidence="1">Cytoplasm</location>
    </subcellularLocation>
</comment>
<comment type="similarity">
    <text evidence="1">Belongs to the D-isomer specific 2-hydroxyacid dehydrogenase family. PdxB subfamily.</text>
</comment>
<dbReference type="EC" id="1.1.1.290" evidence="1"/>
<dbReference type="EMBL" id="AE017354">
    <property type="protein sequence ID" value="AAU27005.1"/>
    <property type="molecule type" value="Genomic_DNA"/>
</dbReference>
<dbReference type="RefSeq" id="WP_010946653.1">
    <property type="nucleotide sequence ID" value="NC_002942.5"/>
</dbReference>
<dbReference type="RefSeq" id="YP_094952.1">
    <property type="nucleotide sequence ID" value="NC_002942.5"/>
</dbReference>
<dbReference type="SMR" id="Q5ZX15"/>
<dbReference type="STRING" id="272624.lpg0918"/>
<dbReference type="PaxDb" id="272624-lpg0918"/>
<dbReference type="KEGG" id="lpn:lpg0918"/>
<dbReference type="PATRIC" id="fig|272624.6.peg.950"/>
<dbReference type="eggNOG" id="COG0111">
    <property type="taxonomic scope" value="Bacteria"/>
</dbReference>
<dbReference type="HOGENOM" id="CLU_019796_4_0_6"/>
<dbReference type="OrthoDB" id="9770208at2"/>
<dbReference type="UniPathway" id="UPA00244">
    <property type="reaction ID" value="UER00310"/>
</dbReference>
<dbReference type="Proteomes" id="UP000000609">
    <property type="component" value="Chromosome"/>
</dbReference>
<dbReference type="GO" id="GO:0005829">
    <property type="term" value="C:cytosol"/>
    <property type="evidence" value="ECO:0007669"/>
    <property type="project" value="TreeGrafter"/>
</dbReference>
<dbReference type="GO" id="GO:0033711">
    <property type="term" value="F:4-phosphoerythronate dehydrogenase activity"/>
    <property type="evidence" value="ECO:0007669"/>
    <property type="project" value="UniProtKB-EC"/>
</dbReference>
<dbReference type="GO" id="GO:0030267">
    <property type="term" value="F:glyoxylate reductase (NADPH) activity"/>
    <property type="evidence" value="ECO:0007669"/>
    <property type="project" value="TreeGrafter"/>
</dbReference>
<dbReference type="GO" id="GO:0016618">
    <property type="term" value="F:hydroxypyruvate reductase [NAD(P)H] activity"/>
    <property type="evidence" value="ECO:0007669"/>
    <property type="project" value="TreeGrafter"/>
</dbReference>
<dbReference type="GO" id="GO:0051287">
    <property type="term" value="F:NAD binding"/>
    <property type="evidence" value="ECO:0007669"/>
    <property type="project" value="InterPro"/>
</dbReference>
<dbReference type="GO" id="GO:0008615">
    <property type="term" value="P:pyridoxine biosynthetic process"/>
    <property type="evidence" value="ECO:0007669"/>
    <property type="project" value="UniProtKB-UniRule"/>
</dbReference>
<dbReference type="CDD" id="cd12158">
    <property type="entry name" value="ErythrP_dh"/>
    <property type="match status" value="1"/>
</dbReference>
<dbReference type="Gene3D" id="3.40.50.720">
    <property type="entry name" value="NAD(P)-binding Rossmann-like Domain"/>
    <property type="match status" value="2"/>
</dbReference>
<dbReference type="HAMAP" id="MF_01825">
    <property type="entry name" value="PdxB"/>
    <property type="match status" value="1"/>
</dbReference>
<dbReference type="InterPro" id="IPR050223">
    <property type="entry name" value="D-isomer_2-hydroxyacid_DH"/>
</dbReference>
<dbReference type="InterPro" id="IPR006139">
    <property type="entry name" value="D-isomer_2_OHA_DH_cat_dom"/>
</dbReference>
<dbReference type="InterPro" id="IPR029753">
    <property type="entry name" value="D-isomer_DH_CS"/>
</dbReference>
<dbReference type="InterPro" id="IPR029752">
    <property type="entry name" value="D-isomer_DH_CS1"/>
</dbReference>
<dbReference type="InterPro" id="IPR006140">
    <property type="entry name" value="D-isomer_DH_NAD-bd"/>
</dbReference>
<dbReference type="InterPro" id="IPR020921">
    <property type="entry name" value="Erythronate-4-P_DHase"/>
</dbReference>
<dbReference type="InterPro" id="IPR036291">
    <property type="entry name" value="NAD(P)-bd_dom_sf"/>
</dbReference>
<dbReference type="PANTHER" id="PTHR10996:SF178">
    <property type="entry name" value="2-HYDROXYACID DEHYDROGENASE YGL185C-RELATED"/>
    <property type="match status" value="1"/>
</dbReference>
<dbReference type="PANTHER" id="PTHR10996">
    <property type="entry name" value="2-HYDROXYACID DEHYDROGENASE-RELATED"/>
    <property type="match status" value="1"/>
</dbReference>
<dbReference type="Pfam" id="PF00389">
    <property type="entry name" value="2-Hacid_dh"/>
    <property type="match status" value="1"/>
</dbReference>
<dbReference type="Pfam" id="PF02826">
    <property type="entry name" value="2-Hacid_dh_C"/>
    <property type="match status" value="1"/>
</dbReference>
<dbReference type="SUPFAM" id="SSF52283">
    <property type="entry name" value="Formate/glycerate dehydrogenase catalytic domain-like"/>
    <property type="match status" value="1"/>
</dbReference>
<dbReference type="SUPFAM" id="SSF51735">
    <property type="entry name" value="NAD(P)-binding Rossmann-fold domains"/>
    <property type="match status" value="1"/>
</dbReference>
<dbReference type="PROSITE" id="PS00065">
    <property type="entry name" value="D_2_HYDROXYACID_DH_1"/>
    <property type="match status" value="1"/>
</dbReference>
<dbReference type="PROSITE" id="PS00671">
    <property type="entry name" value="D_2_HYDROXYACID_DH_3"/>
    <property type="match status" value="1"/>
</dbReference>
<proteinExistence type="inferred from homology"/>
<sequence>MNILADALLPGLDSAFPPPFTVTLYHKADEIPELLHYKDVLLCRSTLKINGDLLKNHQIKFVATATSGTDHIDFPFLESQNISIIDAKGCNAISVADYVVACLAYLDKQQLIQGKTAGIIGLGQVGTKVYERLNAAEFQLCLYDPPKATRDTSFQSCSLEDLFECDLLCVHAELHSDAPYPSLNLINRDFLKELKPGCIIINASRGGIVNEEALLHLGSAILYCTDVYNNEPHIDSRIVSKATLCTPHIAGHSLEAKFAAVAIVSRKLHQMLGLPYPQFATPEKPYRLNENSDWRELALSIYNPIHETLELKHAGNLSSAFLTLRKNHHHRHDFTTYFDSDSIKKYPLLG</sequence>
<keyword id="KW-0963">Cytoplasm</keyword>
<keyword id="KW-0520">NAD</keyword>
<keyword id="KW-0560">Oxidoreductase</keyword>
<keyword id="KW-0664">Pyridoxine biosynthesis</keyword>
<keyword id="KW-1185">Reference proteome</keyword>
<reference key="1">
    <citation type="journal article" date="2004" name="Science">
        <title>The genomic sequence of the accidental pathogen Legionella pneumophila.</title>
        <authorList>
            <person name="Chien M."/>
            <person name="Morozova I."/>
            <person name="Shi S."/>
            <person name="Sheng H."/>
            <person name="Chen J."/>
            <person name="Gomez S.M."/>
            <person name="Asamani G."/>
            <person name="Hill K."/>
            <person name="Nuara J."/>
            <person name="Feder M."/>
            <person name="Rineer J."/>
            <person name="Greenberg J.J."/>
            <person name="Steshenko V."/>
            <person name="Park S.H."/>
            <person name="Zhao B."/>
            <person name="Teplitskaya E."/>
            <person name="Edwards J.R."/>
            <person name="Pampou S."/>
            <person name="Georghiou A."/>
            <person name="Chou I.-C."/>
            <person name="Iannuccilli W."/>
            <person name="Ulz M.E."/>
            <person name="Kim D.H."/>
            <person name="Geringer-Sameth A."/>
            <person name="Goldsberry C."/>
            <person name="Morozov P."/>
            <person name="Fischer S.G."/>
            <person name="Segal G."/>
            <person name="Qu X."/>
            <person name="Rzhetsky A."/>
            <person name="Zhang P."/>
            <person name="Cayanis E."/>
            <person name="De Jong P.J."/>
            <person name="Ju J."/>
            <person name="Kalachikov S."/>
            <person name="Shuman H.A."/>
            <person name="Russo J.J."/>
        </authorList>
    </citation>
    <scope>NUCLEOTIDE SEQUENCE [LARGE SCALE GENOMIC DNA]</scope>
    <source>
        <strain>Philadelphia 1 / ATCC 33152 / DSM 7513</strain>
    </source>
</reference>